<proteinExistence type="evidence at protein level"/>
<dbReference type="EMBL" id="CU329671">
    <property type="protein sequence ID" value="CAB37603.1"/>
    <property type="molecule type" value="Genomic_DNA"/>
</dbReference>
<dbReference type="RefSeq" id="NP_595505.1">
    <property type="nucleotide sequence ID" value="NM_001021415.2"/>
</dbReference>
<dbReference type="PaxDb" id="4896-SPBC651.07.1"/>
<dbReference type="EnsemblFungi" id="SPBC651.07.1">
    <property type="protein sequence ID" value="SPBC651.07.1:pep"/>
    <property type="gene ID" value="SPBC651.07"/>
</dbReference>
<dbReference type="KEGG" id="spo:14217743"/>
<dbReference type="PomBase" id="SPBC651.07"/>
<dbReference type="VEuPathDB" id="FungiDB:SPBC651.07"/>
<dbReference type="HOGENOM" id="CLU_1054331_0_0_1"/>
<dbReference type="InParanoid" id="W6JQK2"/>
<dbReference type="OMA" id="KYSNYVA"/>
<dbReference type="PRO" id="PR:W6JQK2"/>
<dbReference type="Proteomes" id="UP000002485">
    <property type="component" value="Chromosome II"/>
</dbReference>
<gene>
    <name evidence="2" type="ORF">SPBC651.07</name>
</gene>
<reference key="1">
    <citation type="journal article" date="2002" name="Nature">
        <title>The genome sequence of Schizosaccharomyces pombe.</title>
        <authorList>
            <person name="Wood V."/>
            <person name="Gwilliam R."/>
            <person name="Rajandream M.A."/>
            <person name="Lyne M.H."/>
            <person name="Lyne R."/>
            <person name="Stewart A."/>
            <person name="Sgouros J.G."/>
            <person name="Peat N."/>
            <person name="Hayles J."/>
            <person name="Baker S.G."/>
            <person name="Basham D."/>
            <person name="Bowman S."/>
            <person name="Brooks K."/>
            <person name="Brown D."/>
            <person name="Brown S."/>
            <person name="Chillingworth T."/>
            <person name="Churcher C.M."/>
            <person name="Collins M."/>
            <person name="Connor R."/>
            <person name="Cronin A."/>
            <person name="Davis P."/>
            <person name="Feltwell T."/>
            <person name="Fraser A."/>
            <person name="Gentles S."/>
            <person name="Goble A."/>
            <person name="Hamlin N."/>
            <person name="Harris D.E."/>
            <person name="Hidalgo J."/>
            <person name="Hodgson G."/>
            <person name="Holroyd S."/>
            <person name="Hornsby T."/>
            <person name="Howarth S."/>
            <person name="Huckle E.J."/>
            <person name="Hunt S."/>
            <person name="Jagels K."/>
            <person name="James K.D."/>
            <person name="Jones L."/>
            <person name="Jones M."/>
            <person name="Leather S."/>
            <person name="McDonald S."/>
            <person name="McLean J."/>
            <person name="Mooney P."/>
            <person name="Moule S."/>
            <person name="Mungall K.L."/>
            <person name="Murphy L.D."/>
            <person name="Niblett D."/>
            <person name="Odell C."/>
            <person name="Oliver K."/>
            <person name="O'Neil S."/>
            <person name="Pearson D."/>
            <person name="Quail M.A."/>
            <person name="Rabbinowitsch E."/>
            <person name="Rutherford K.M."/>
            <person name="Rutter S."/>
            <person name="Saunders D."/>
            <person name="Seeger K."/>
            <person name="Sharp S."/>
            <person name="Skelton J."/>
            <person name="Simmonds M.N."/>
            <person name="Squares R."/>
            <person name="Squares S."/>
            <person name="Stevens K."/>
            <person name="Taylor K."/>
            <person name="Taylor R.G."/>
            <person name="Tivey A."/>
            <person name="Walsh S.V."/>
            <person name="Warren T."/>
            <person name="Whitehead S."/>
            <person name="Woodward J.R."/>
            <person name="Volckaert G."/>
            <person name="Aert R."/>
            <person name="Robben J."/>
            <person name="Grymonprez B."/>
            <person name="Weltjens I."/>
            <person name="Vanstreels E."/>
            <person name="Rieger M."/>
            <person name="Schaefer M."/>
            <person name="Mueller-Auer S."/>
            <person name="Gabel C."/>
            <person name="Fuchs M."/>
            <person name="Duesterhoeft A."/>
            <person name="Fritzc C."/>
            <person name="Holzer E."/>
            <person name="Moestl D."/>
            <person name="Hilbert H."/>
            <person name="Borzym K."/>
            <person name="Langer I."/>
            <person name="Beck A."/>
            <person name="Lehrach H."/>
            <person name="Reinhardt R."/>
            <person name="Pohl T.M."/>
            <person name="Eger P."/>
            <person name="Zimmermann W."/>
            <person name="Wedler H."/>
            <person name="Wambutt R."/>
            <person name="Purnelle B."/>
            <person name="Goffeau A."/>
            <person name="Cadieu E."/>
            <person name="Dreano S."/>
            <person name="Gloux S."/>
            <person name="Lelaure V."/>
            <person name="Mottier S."/>
            <person name="Galibert F."/>
            <person name="Aves S.J."/>
            <person name="Xiang Z."/>
            <person name="Hunt C."/>
            <person name="Moore K."/>
            <person name="Hurst S.M."/>
            <person name="Lucas M."/>
            <person name="Rochet M."/>
            <person name="Gaillardin C."/>
            <person name="Tallada V.A."/>
            <person name="Garzon A."/>
            <person name="Thode G."/>
            <person name="Daga R.R."/>
            <person name="Cruzado L."/>
            <person name="Jimenez J."/>
            <person name="Sanchez M."/>
            <person name="del Rey F."/>
            <person name="Benito J."/>
            <person name="Dominguez A."/>
            <person name="Revuelta J.L."/>
            <person name="Moreno S."/>
            <person name="Armstrong J."/>
            <person name="Forsburg S.L."/>
            <person name="Cerutti L."/>
            <person name="Lowe T."/>
            <person name="McCombie W.R."/>
            <person name="Paulsen I."/>
            <person name="Potashkin J."/>
            <person name="Shpakovski G.V."/>
            <person name="Ussery D."/>
            <person name="Barrell B.G."/>
            <person name="Nurse P."/>
        </authorList>
    </citation>
    <scope>NUCLEOTIDE SEQUENCE [LARGE SCALE GENOMIC DNA]</scope>
    <source>
        <strain>972 / ATCC 24843</strain>
    </source>
</reference>
<reference key="2">
    <citation type="journal article" date="2012" name="Cell">
        <title>Quantitative analysis of fission yeast transcriptomes and proteomes in proliferating and quiescent cells.</title>
        <authorList>
            <person name="Marguerat S."/>
            <person name="Schmidt A."/>
            <person name="Codlin S."/>
            <person name="Chen W."/>
            <person name="Aebersold R."/>
            <person name="Baehler J."/>
        </authorList>
    </citation>
    <scope>IDENTIFICATION BY MASS SPECTROMETRY</scope>
</reference>
<feature type="chain" id="PRO_0000434007" description="Uncharacterized protein SPBC651.07">
    <location>
        <begin position="1"/>
        <end position="268"/>
    </location>
</feature>
<sequence length="268" mass="30102">MIVIEPTILYEAAALYTRYTANGGDSNDVVALLVGPIVQTLSIPSSTSSAPLVTSVREILELACNDAVLDKSFLNERLEHCKLQDFPLVGCLVLGNRVDHRVRSIAHQLQEATAFPYLMLFPSNFDLTQLKLFRLPDFNNKDQFWKEEWSTEQYEIAENPSGYASALHTLTQLDDGSETNAINVSTQKFAIQKLQSCAMRVREQLEYNPTTFASRDLSSISYICRLLDTMDLPSDTFSHQKSQASFLCALQQILRCTELIEKVYSNGS</sequence>
<name>YBW7_SCHPO</name>
<evidence type="ECO:0000305" key="1"/>
<evidence type="ECO:0000312" key="2">
    <source>
        <dbReference type="PomBase" id="SPBC651.07"/>
    </source>
</evidence>
<organism>
    <name type="scientific">Schizosaccharomyces pombe (strain 972 / ATCC 24843)</name>
    <name type="common">Fission yeast</name>
    <dbReference type="NCBI Taxonomy" id="284812"/>
    <lineage>
        <taxon>Eukaryota</taxon>
        <taxon>Fungi</taxon>
        <taxon>Dikarya</taxon>
        <taxon>Ascomycota</taxon>
        <taxon>Taphrinomycotina</taxon>
        <taxon>Schizosaccharomycetes</taxon>
        <taxon>Schizosaccharomycetales</taxon>
        <taxon>Schizosaccharomycetaceae</taxon>
        <taxon>Schizosaccharomyces</taxon>
    </lineage>
</organism>
<keyword id="KW-1185">Reference proteome</keyword>
<accession>W6JQK2</accession>
<protein>
    <recommendedName>
        <fullName evidence="1">Uncharacterized protein SPBC651.07</fullName>
    </recommendedName>
</protein>